<comment type="function">
    <text evidence="1">Involved in the import of threonine and serine into the cell, with the concomitant import of a proton (symport system).</text>
</comment>
<comment type="catalytic activity">
    <reaction evidence="1">
        <text>L-threonine(in) + H(+)(in) = L-threonine(out) + H(+)(out)</text>
        <dbReference type="Rhea" id="RHEA:28883"/>
        <dbReference type="ChEBI" id="CHEBI:15378"/>
        <dbReference type="ChEBI" id="CHEBI:57926"/>
    </reaction>
    <physiologicalReaction direction="right-to-left" evidence="1">
        <dbReference type="Rhea" id="RHEA:28885"/>
    </physiologicalReaction>
</comment>
<comment type="catalytic activity">
    <reaction evidence="1">
        <text>L-serine(in) + H(+)(in) = L-serine(out) + H(+)(out)</text>
        <dbReference type="Rhea" id="RHEA:28887"/>
        <dbReference type="ChEBI" id="CHEBI:15378"/>
        <dbReference type="ChEBI" id="CHEBI:33384"/>
    </reaction>
    <physiologicalReaction direction="right-to-left" evidence="1">
        <dbReference type="Rhea" id="RHEA:28889"/>
    </physiologicalReaction>
</comment>
<comment type="subcellular location">
    <subcellularLocation>
        <location evidence="1">Cell inner membrane</location>
        <topology evidence="1">Multi-pass membrane protein</topology>
    </subcellularLocation>
</comment>
<comment type="similarity">
    <text evidence="1">Belongs to the amino acid/polyamine transporter 2 family. SdaC/TdcC subfamily.</text>
</comment>
<comment type="sequence caution" evidence="2">
    <conflict type="erroneous initiation">
        <sequence resource="EMBL-CDS" id="ACY83740"/>
    </conflict>
    <text>Truncated N-terminus.</text>
</comment>
<proteinExistence type="inferred from homology"/>
<dbReference type="EMBL" id="CP001135">
    <property type="protein sequence ID" value="ACY83740.1"/>
    <property type="status" value="ALT_INIT"/>
    <property type="molecule type" value="Genomic_DNA"/>
</dbReference>
<dbReference type="RefSeq" id="WP_041692492.1">
    <property type="nucleotide sequence ID" value="NC_013508.1"/>
</dbReference>
<dbReference type="SMR" id="D0ZE09"/>
<dbReference type="GeneID" id="72527779"/>
<dbReference type="KEGG" id="etr:ETAE_0895"/>
<dbReference type="HOGENOM" id="CLU_052043_1_1_6"/>
<dbReference type="OrthoDB" id="1627372at2"/>
<dbReference type="Proteomes" id="UP000002634">
    <property type="component" value="Chromosome"/>
</dbReference>
<dbReference type="GO" id="GO:0005886">
    <property type="term" value="C:plasma membrane"/>
    <property type="evidence" value="ECO:0007669"/>
    <property type="project" value="UniProtKB-SubCell"/>
</dbReference>
<dbReference type="GO" id="GO:0015194">
    <property type="term" value="F:L-serine transmembrane transporter activity"/>
    <property type="evidence" value="ECO:0007669"/>
    <property type="project" value="InterPro"/>
</dbReference>
<dbReference type="GO" id="GO:0015293">
    <property type="term" value="F:symporter activity"/>
    <property type="evidence" value="ECO:0007669"/>
    <property type="project" value="UniProtKB-UniRule"/>
</dbReference>
<dbReference type="GO" id="GO:0015565">
    <property type="term" value="F:threonine efflux transmembrane transporter activity"/>
    <property type="evidence" value="ECO:0007669"/>
    <property type="project" value="InterPro"/>
</dbReference>
<dbReference type="HAMAP" id="MF_01583">
    <property type="entry name" value="Thr_Ser_transp_TdcC"/>
    <property type="match status" value="1"/>
</dbReference>
<dbReference type="InterPro" id="IPR018227">
    <property type="entry name" value="Amino_acid_transport_2"/>
</dbReference>
<dbReference type="InterPro" id="IPR023726">
    <property type="entry name" value="Thr/Ser_transpt_TdcC"/>
</dbReference>
<dbReference type="NCBIfam" id="NF010152">
    <property type="entry name" value="PRK13629.1"/>
    <property type="match status" value="1"/>
</dbReference>
<dbReference type="PANTHER" id="PTHR35334">
    <property type="entry name" value="SERINE TRANSPORTER"/>
    <property type="match status" value="1"/>
</dbReference>
<dbReference type="PANTHER" id="PTHR35334:SF1">
    <property type="entry name" value="THREONINE_SERINE TRANSPORTER TDCC"/>
    <property type="match status" value="1"/>
</dbReference>
<evidence type="ECO:0000255" key="1">
    <source>
        <dbReference type="HAMAP-Rule" id="MF_01583"/>
    </source>
</evidence>
<evidence type="ECO:0000305" key="2"/>
<feature type="chain" id="PRO_0000401181" description="Threonine/serine transporter TdcC">
    <location>
        <begin position="1"/>
        <end position="443"/>
    </location>
</feature>
<feature type="transmembrane region" description="Helical" evidence="1">
    <location>
        <begin position="24"/>
        <end position="44"/>
    </location>
</feature>
<feature type="transmembrane region" description="Helical" evidence="1">
    <location>
        <begin position="45"/>
        <end position="65"/>
    </location>
</feature>
<feature type="transmembrane region" description="Helical" evidence="1">
    <location>
        <begin position="95"/>
        <end position="115"/>
    </location>
</feature>
<feature type="transmembrane region" description="Helical" evidence="1">
    <location>
        <begin position="140"/>
        <end position="160"/>
    </location>
</feature>
<feature type="transmembrane region" description="Helical" evidence="1">
    <location>
        <begin position="163"/>
        <end position="183"/>
    </location>
</feature>
<feature type="transmembrane region" description="Helical" evidence="1">
    <location>
        <begin position="207"/>
        <end position="227"/>
    </location>
</feature>
<feature type="transmembrane region" description="Helical" evidence="1">
    <location>
        <begin position="259"/>
        <end position="279"/>
    </location>
</feature>
<feature type="transmembrane region" description="Helical" evidence="1">
    <location>
        <begin position="319"/>
        <end position="339"/>
    </location>
</feature>
<feature type="transmembrane region" description="Helical" evidence="1">
    <location>
        <begin position="363"/>
        <end position="383"/>
    </location>
</feature>
<feature type="transmembrane region" description="Helical" evidence="1">
    <location>
        <begin position="385"/>
        <end position="405"/>
    </location>
</feature>
<feature type="transmembrane region" description="Helical" evidence="1">
    <location>
        <begin position="423"/>
        <end position="443"/>
    </location>
</feature>
<sequence>MSSTDSVVAGQAKVTTWRKTDTRWVLGLFGTAIGAGVLFFPISAGIGGLLPIIFMLILAFPIAFFCHRALARLCLSGRSISDNITDTVDQHFGHVGGVVITFLYFFAICPLLWIYGVTITNTFIAFWQHQLLLPAINRGVVALAILLVMAFFIYFGKDLMVKVMGYLVFPFITCLVLISLSLIPYWTGDIFTSFDMHSLSLFGSHGILVTVWLGIAIMVFSFNFSPIVSSFVVSKREEYEADFGREYTEQKCAKIISRASVLMVVVVMFFAFSCLFTLSPQDMAQAKQQNIPILSYLANHFSSLGSGKSTYATVLEYGASIIALVAIFKSFFGHYLGTLEGLNGLIIKFGYHGEKSQAPMKKLNMISMVIIMGSTWVIAYINPNILDLIGAMGAPIIAALLCLLPMYAVWRVPALAKYKGKASNYFVTIIGLLTILNIVYQLM</sequence>
<accession>D0ZE09</accession>
<name>TDCC_EDWPI</name>
<gene>
    <name evidence="1" type="primary">tdcC</name>
    <name type="ordered locus">ETAE_0895</name>
</gene>
<keyword id="KW-0029">Amino-acid transport</keyword>
<keyword id="KW-0997">Cell inner membrane</keyword>
<keyword id="KW-1003">Cell membrane</keyword>
<keyword id="KW-0472">Membrane</keyword>
<keyword id="KW-1185">Reference proteome</keyword>
<keyword id="KW-0769">Symport</keyword>
<keyword id="KW-0812">Transmembrane</keyword>
<keyword id="KW-1133">Transmembrane helix</keyword>
<keyword id="KW-0813">Transport</keyword>
<protein>
    <recommendedName>
        <fullName evidence="1">Threonine/serine transporter TdcC</fullName>
    </recommendedName>
    <alternativeName>
        <fullName evidence="1">H(+)/threonine-serine symporter</fullName>
    </alternativeName>
</protein>
<organism>
    <name type="scientific">Edwardsiella piscicida</name>
    <dbReference type="NCBI Taxonomy" id="1263550"/>
    <lineage>
        <taxon>Bacteria</taxon>
        <taxon>Pseudomonadati</taxon>
        <taxon>Pseudomonadota</taxon>
        <taxon>Gammaproteobacteria</taxon>
        <taxon>Enterobacterales</taxon>
        <taxon>Hafniaceae</taxon>
        <taxon>Edwardsiella</taxon>
    </lineage>
</organism>
<reference key="1">
    <citation type="journal article" date="2009" name="PLoS ONE">
        <title>Genome sequence of the versatile fish pathogen Edwardsiella tarda provides insights into its adaptation to broad host ranges and intracellular niches.</title>
        <authorList>
            <person name="Wang Q."/>
            <person name="Yang M."/>
            <person name="Xiao J."/>
            <person name="Wu H."/>
            <person name="Wang X."/>
            <person name="Lv Y."/>
            <person name="Xu L."/>
            <person name="Zheng H."/>
            <person name="Wang S."/>
            <person name="Zhao G."/>
            <person name="Liu Q."/>
            <person name="Zhang Y."/>
        </authorList>
    </citation>
    <scope>NUCLEOTIDE SEQUENCE [LARGE SCALE GENOMIC DNA]</scope>
    <source>
        <strain>EIB202 / CCTCC M208068</strain>
    </source>
</reference>